<gene>
    <name evidence="1" type="primary">tsf</name>
    <name type="ordered locus">CHY_1786</name>
</gene>
<keyword id="KW-0963">Cytoplasm</keyword>
<keyword id="KW-0251">Elongation factor</keyword>
<keyword id="KW-0648">Protein biosynthesis</keyword>
<keyword id="KW-1185">Reference proteome</keyword>
<sequence>MITSQMVKELRERTGAGMMDCKRALEEANGDMEKAIEILRQKGLAAAAKKAGRIATEGVVEAYIHGGGRIGVLVEINCETDFVAKTDEFKSFARDIAMQIAAAKPEYVRREDVPQEVIEKEREILRAQALNEGKPANVVEKMVEGRLEKFFKEVCLLEQPFIKNPDITVKDLLTEKIAKIGENINIRRFVRFELGEGLAKKEEDFAAEVAAAMKVNK</sequence>
<name>EFTS_CARHZ</name>
<dbReference type="EMBL" id="CP000141">
    <property type="protein sequence ID" value="ABB14340.1"/>
    <property type="molecule type" value="Genomic_DNA"/>
</dbReference>
<dbReference type="RefSeq" id="WP_011344680.1">
    <property type="nucleotide sequence ID" value="NC_007503.1"/>
</dbReference>
<dbReference type="SMR" id="Q3AB78"/>
<dbReference type="FunCoup" id="Q3AB78">
    <property type="interactions" value="452"/>
</dbReference>
<dbReference type="STRING" id="246194.CHY_1786"/>
<dbReference type="KEGG" id="chy:CHY_1786"/>
<dbReference type="eggNOG" id="COG0264">
    <property type="taxonomic scope" value="Bacteria"/>
</dbReference>
<dbReference type="HOGENOM" id="CLU_047155_1_1_9"/>
<dbReference type="InParanoid" id="Q3AB78"/>
<dbReference type="OrthoDB" id="9808348at2"/>
<dbReference type="Proteomes" id="UP000002706">
    <property type="component" value="Chromosome"/>
</dbReference>
<dbReference type="GO" id="GO:0005737">
    <property type="term" value="C:cytoplasm"/>
    <property type="evidence" value="ECO:0007669"/>
    <property type="project" value="UniProtKB-SubCell"/>
</dbReference>
<dbReference type="GO" id="GO:0003746">
    <property type="term" value="F:translation elongation factor activity"/>
    <property type="evidence" value="ECO:0007669"/>
    <property type="project" value="UniProtKB-UniRule"/>
</dbReference>
<dbReference type="CDD" id="cd14275">
    <property type="entry name" value="UBA_EF-Ts"/>
    <property type="match status" value="1"/>
</dbReference>
<dbReference type="FunFam" id="1.10.286.20:FF:000001">
    <property type="entry name" value="Elongation factor Ts"/>
    <property type="match status" value="1"/>
</dbReference>
<dbReference type="FunFam" id="1.10.8.10:FF:000001">
    <property type="entry name" value="Elongation factor Ts"/>
    <property type="match status" value="1"/>
</dbReference>
<dbReference type="Gene3D" id="1.10.286.20">
    <property type="match status" value="1"/>
</dbReference>
<dbReference type="Gene3D" id="1.10.8.10">
    <property type="entry name" value="DNA helicase RuvA subunit, C-terminal domain"/>
    <property type="match status" value="1"/>
</dbReference>
<dbReference type="Gene3D" id="3.30.479.20">
    <property type="entry name" value="Elongation factor Ts, dimerisation domain"/>
    <property type="match status" value="1"/>
</dbReference>
<dbReference type="HAMAP" id="MF_00050">
    <property type="entry name" value="EF_Ts"/>
    <property type="match status" value="1"/>
</dbReference>
<dbReference type="InterPro" id="IPR036402">
    <property type="entry name" value="EF-Ts_dimer_sf"/>
</dbReference>
<dbReference type="InterPro" id="IPR001816">
    <property type="entry name" value="Transl_elong_EFTs/EF1B"/>
</dbReference>
<dbReference type="InterPro" id="IPR014039">
    <property type="entry name" value="Transl_elong_EFTs/EF1B_dimer"/>
</dbReference>
<dbReference type="InterPro" id="IPR018101">
    <property type="entry name" value="Transl_elong_Ts_CS"/>
</dbReference>
<dbReference type="InterPro" id="IPR009060">
    <property type="entry name" value="UBA-like_sf"/>
</dbReference>
<dbReference type="NCBIfam" id="TIGR00116">
    <property type="entry name" value="tsf"/>
    <property type="match status" value="2"/>
</dbReference>
<dbReference type="PANTHER" id="PTHR11741">
    <property type="entry name" value="ELONGATION FACTOR TS"/>
    <property type="match status" value="1"/>
</dbReference>
<dbReference type="PANTHER" id="PTHR11741:SF0">
    <property type="entry name" value="ELONGATION FACTOR TS, MITOCHONDRIAL"/>
    <property type="match status" value="1"/>
</dbReference>
<dbReference type="Pfam" id="PF00889">
    <property type="entry name" value="EF_TS"/>
    <property type="match status" value="2"/>
</dbReference>
<dbReference type="SUPFAM" id="SSF54713">
    <property type="entry name" value="Elongation factor Ts (EF-Ts), dimerisation domain"/>
    <property type="match status" value="1"/>
</dbReference>
<dbReference type="SUPFAM" id="SSF46934">
    <property type="entry name" value="UBA-like"/>
    <property type="match status" value="1"/>
</dbReference>
<dbReference type="PROSITE" id="PS01126">
    <property type="entry name" value="EF_TS_1"/>
    <property type="match status" value="1"/>
</dbReference>
<dbReference type="PROSITE" id="PS01127">
    <property type="entry name" value="EF_TS_2"/>
    <property type="match status" value="1"/>
</dbReference>
<organism>
    <name type="scientific">Carboxydothermus hydrogenoformans (strain ATCC BAA-161 / DSM 6008 / Z-2901)</name>
    <dbReference type="NCBI Taxonomy" id="246194"/>
    <lineage>
        <taxon>Bacteria</taxon>
        <taxon>Bacillati</taxon>
        <taxon>Bacillota</taxon>
        <taxon>Clostridia</taxon>
        <taxon>Thermoanaerobacterales</taxon>
        <taxon>Thermoanaerobacteraceae</taxon>
        <taxon>Carboxydothermus</taxon>
    </lineage>
</organism>
<comment type="function">
    <text evidence="1">Associates with the EF-Tu.GDP complex and induces the exchange of GDP to GTP. It remains bound to the aminoacyl-tRNA.EF-Tu.GTP complex up to the GTP hydrolysis stage on the ribosome.</text>
</comment>
<comment type="subcellular location">
    <subcellularLocation>
        <location evidence="1">Cytoplasm</location>
    </subcellularLocation>
</comment>
<comment type="similarity">
    <text evidence="1">Belongs to the EF-Ts family.</text>
</comment>
<reference key="1">
    <citation type="journal article" date="2005" name="PLoS Genet.">
        <title>Life in hot carbon monoxide: the complete genome sequence of Carboxydothermus hydrogenoformans Z-2901.</title>
        <authorList>
            <person name="Wu M."/>
            <person name="Ren Q."/>
            <person name="Durkin A.S."/>
            <person name="Daugherty S.C."/>
            <person name="Brinkac L.M."/>
            <person name="Dodson R.J."/>
            <person name="Madupu R."/>
            <person name="Sullivan S.A."/>
            <person name="Kolonay J.F."/>
            <person name="Nelson W.C."/>
            <person name="Tallon L.J."/>
            <person name="Jones K.M."/>
            <person name="Ulrich L.E."/>
            <person name="Gonzalez J.M."/>
            <person name="Zhulin I.B."/>
            <person name="Robb F.T."/>
            <person name="Eisen J.A."/>
        </authorList>
    </citation>
    <scope>NUCLEOTIDE SEQUENCE [LARGE SCALE GENOMIC DNA]</scope>
    <source>
        <strain>ATCC BAA-161 / DSM 6008 / Z-2901</strain>
    </source>
</reference>
<evidence type="ECO:0000255" key="1">
    <source>
        <dbReference type="HAMAP-Rule" id="MF_00050"/>
    </source>
</evidence>
<proteinExistence type="inferred from homology"/>
<accession>Q3AB78</accession>
<protein>
    <recommendedName>
        <fullName evidence="1">Elongation factor Ts</fullName>
        <shortName evidence="1">EF-Ts</shortName>
    </recommendedName>
</protein>
<feature type="chain" id="PRO_0000241470" description="Elongation factor Ts">
    <location>
        <begin position="1"/>
        <end position="217"/>
    </location>
</feature>
<feature type="region of interest" description="Involved in Mg(2+) ion dislocation from EF-Tu" evidence="1">
    <location>
        <begin position="80"/>
        <end position="83"/>
    </location>
</feature>